<protein>
    <recommendedName>
        <fullName evidence="1">UPF0182 protein CLI_0022</fullName>
    </recommendedName>
</protein>
<reference key="1">
    <citation type="submission" date="2007-06" db="EMBL/GenBank/DDBJ databases">
        <authorList>
            <person name="Brinkac L.M."/>
            <person name="Daugherty S."/>
            <person name="Dodson R.J."/>
            <person name="Madupu R."/>
            <person name="Brown J.L."/>
            <person name="Bruce D."/>
            <person name="Detter C."/>
            <person name="Munk C."/>
            <person name="Smith L.A."/>
            <person name="Smith T.J."/>
            <person name="White O."/>
            <person name="Brettin T.S."/>
        </authorList>
    </citation>
    <scope>NUCLEOTIDE SEQUENCE [LARGE SCALE GENOMIC DNA]</scope>
    <source>
        <strain>Langeland / NCTC 10281 / Type F</strain>
    </source>
</reference>
<organism>
    <name type="scientific">Clostridium botulinum (strain Langeland / NCTC 10281 / Type F)</name>
    <dbReference type="NCBI Taxonomy" id="441772"/>
    <lineage>
        <taxon>Bacteria</taxon>
        <taxon>Bacillati</taxon>
        <taxon>Bacillota</taxon>
        <taxon>Clostridia</taxon>
        <taxon>Eubacteriales</taxon>
        <taxon>Clostridiaceae</taxon>
        <taxon>Clostridium</taxon>
    </lineage>
</organism>
<keyword id="KW-1003">Cell membrane</keyword>
<keyword id="KW-0472">Membrane</keyword>
<keyword id="KW-0812">Transmembrane</keyword>
<keyword id="KW-1133">Transmembrane helix</keyword>
<dbReference type="EMBL" id="CP000728">
    <property type="protein sequence ID" value="ABS42821.1"/>
    <property type="molecule type" value="Genomic_DNA"/>
</dbReference>
<dbReference type="RefSeq" id="WP_011987165.1">
    <property type="nucleotide sequence ID" value="NC_009699.1"/>
</dbReference>
<dbReference type="SMR" id="A7G9C1"/>
<dbReference type="KEGG" id="cbf:CLI_0022"/>
<dbReference type="HOGENOM" id="CLU_007733_0_0_9"/>
<dbReference type="Proteomes" id="UP000002410">
    <property type="component" value="Chromosome"/>
</dbReference>
<dbReference type="GO" id="GO:0005576">
    <property type="term" value="C:extracellular region"/>
    <property type="evidence" value="ECO:0007669"/>
    <property type="project" value="TreeGrafter"/>
</dbReference>
<dbReference type="GO" id="GO:0005886">
    <property type="term" value="C:plasma membrane"/>
    <property type="evidence" value="ECO:0007669"/>
    <property type="project" value="UniProtKB-SubCell"/>
</dbReference>
<dbReference type="HAMAP" id="MF_01600">
    <property type="entry name" value="UPF0182"/>
    <property type="match status" value="1"/>
</dbReference>
<dbReference type="InterPro" id="IPR005372">
    <property type="entry name" value="UPF0182"/>
</dbReference>
<dbReference type="NCBIfam" id="NF000825">
    <property type="entry name" value="PRK00068.1"/>
    <property type="match status" value="1"/>
</dbReference>
<dbReference type="PANTHER" id="PTHR39344">
    <property type="entry name" value="UPF0182 PROTEIN SLL1060"/>
    <property type="match status" value="1"/>
</dbReference>
<dbReference type="PANTHER" id="PTHR39344:SF1">
    <property type="entry name" value="UPF0182 PROTEIN SLL1060"/>
    <property type="match status" value="1"/>
</dbReference>
<dbReference type="Pfam" id="PF03699">
    <property type="entry name" value="UPF0182"/>
    <property type="match status" value="1"/>
</dbReference>
<feature type="chain" id="PRO_0000335542" description="UPF0182 protein CLI_0022">
    <location>
        <begin position="1"/>
        <end position="893"/>
    </location>
</feature>
<feature type="transmembrane region" description="Helical" evidence="1">
    <location>
        <begin position="9"/>
        <end position="29"/>
    </location>
</feature>
<feature type="transmembrane region" description="Helical" evidence="1">
    <location>
        <begin position="49"/>
        <end position="69"/>
    </location>
</feature>
<feature type="transmembrane region" description="Helical" evidence="1">
    <location>
        <begin position="94"/>
        <end position="114"/>
    </location>
</feature>
<feature type="transmembrane region" description="Helical" evidence="1">
    <location>
        <begin position="154"/>
        <end position="174"/>
    </location>
</feature>
<feature type="transmembrane region" description="Helical" evidence="1">
    <location>
        <begin position="202"/>
        <end position="222"/>
    </location>
</feature>
<feature type="transmembrane region" description="Helical" evidence="1">
    <location>
        <begin position="246"/>
        <end position="266"/>
    </location>
</feature>
<feature type="transmembrane region" description="Helical" evidence="1">
    <location>
        <begin position="273"/>
        <end position="293"/>
    </location>
</feature>
<sequence length="893" mass="104046">MKNKKALFIPLFIIILFIAFFNKIINFIINIKWFEEVNYLAVYFTKMRAIIILMIPIFIIFFISIWMYYKSLTINKNKSVVDIGLNKNNYGKKLFFIFNFIVSIFLAYIFSSSYWYRILQFNNSVDFNVKDPIFFKDVSFYIFKLPLFESLYKVIISLLLFLVITTFIAYFILEAKYKIQSRKDINLKNINHGIKSFAGKQLAIVSGLIILFISFGHLIKIWNLVYSSNGVSFGASYTDVHATLLFYKIIVVITLISSIVTLLSIVKGKFKPVSICIGITIFLIVSQNIASFLVQNFIVKSNEKTLEQPYIKNNIDLTRKAFALDDIEIRDFDIKNDLQKQDIADNKASIDNVRINSFKPTLEFYNQVQIIRYYYTFNDIDIDRYNINGKYNQVFLAAREIDTDALNPNTWQNRHLIYTHGFGAVMNKVNSVTSEGQPDFVIKDIPPYNKTNIKLTNPRIYFGEKTNDYVIVNTKINEFDYPREDSNKTNKYNGHAGIKTSFINRLLFAINKKDINFLLSKDIKKDSKIIINRNIVERAKKIAPFLTYDSDPYMVIYNGKIYWIIDAYTTTNRYPYSEPYDSINYIRNSAKVVIDSVDGDTNFYITDKKDPIVNNYAKIFKGLFKEEKDAPKEIREHFRYPKDLFSIQSKVLGKYHVKDPGVFYNGEDLWEVSKDQKHVEGETNTNDAPYIIMKLPDQNKEEMVLLNYFNVMKKDNMIALFGARMDGEQYGKKILYKLPSDKTVYSPYLFKQKINQDTNISKELSLWNREGSKVQYGDTIILPIKNSLLYIEPLYLRASGKNSIPEMKRVILSYNDKLVLSSSIQEGIKEIFNSKDNKINDKNEKDSTKTIDDSKLKKAQEYYNKAIEAQKNGDWTKYGENINELGNILNSIK</sequence>
<name>Y022_CLOBL</name>
<accession>A7G9C1</accession>
<proteinExistence type="inferred from homology"/>
<evidence type="ECO:0000255" key="1">
    <source>
        <dbReference type="HAMAP-Rule" id="MF_01600"/>
    </source>
</evidence>
<comment type="subcellular location">
    <subcellularLocation>
        <location evidence="1">Cell membrane</location>
        <topology evidence="1">Multi-pass membrane protein</topology>
    </subcellularLocation>
</comment>
<comment type="similarity">
    <text evidence="1">Belongs to the UPF0182 family.</text>
</comment>
<gene>
    <name type="ordered locus">CLI_0022</name>
</gene>